<keyword id="KW-0025">Alternative splicing</keyword>
<keyword id="KW-0040">ANK repeat</keyword>
<keyword id="KW-0963">Cytoplasm</keyword>
<keyword id="KW-0539">Nucleus</keyword>
<keyword id="KW-0597">Phosphoprotein</keyword>
<keyword id="KW-1267">Proteomics identification</keyword>
<keyword id="KW-1185">Reference proteome</keyword>
<keyword id="KW-0677">Repeat</keyword>
<gene>
    <name type="primary">ANKRD2</name>
    <name type="synonym">ARPP</name>
</gene>
<dbReference type="EMBL" id="AJ304804">
    <property type="protein sequence ID" value="CAC19411.1"/>
    <property type="status" value="ALT_INIT"/>
    <property type="molecule type" value="Genomic_DNA"/>
</dbReference>
<dbReference type="EMBL" id="AJ304805">
    <property type="protein sequence ID" value="CAC19412.1"/>
    <property type="status" value="ALT_INIT"/>
    <property type="molecule type" value="mRNA"/>
</dbReference>
<dbReference type="EMBL" id="AJ583444">
    <property type="protein sequence ID" value="CAE47432.1"/>
    <property type="status" value="ALT_INIT"/>
    <property type="molecule type" value="mRNA"/>
</dbReference>
<dbReference type="EMBL" id="AK056990">
    <property type="status" value="NOT_ANNOTATED_CDS"/>
    <property type="molecule type" value="mRNA"/>
</dbReference>
<dbReference type="EMBL" id="AL355315">
    <property type="status" value="NOT_ANNOTATED_CDS"/>
    <property type="molecule type" value="Genomic_DNA"/>
</dbReference>
<dbReference type="EMBL" id="AL359388">
    <property type="status" value="NOT_ANNOTATED_CDS"/>
    <property type="molecule type" value="Genomic_DNA"/>
</dbReference>
<dbReference type="EMBL" id="BC020817">
    <property type="protein sequence ID" value="AAH20817.2"/>
    <property type="molecule type" value="mRNA"/>
</dbReference>
<dbReference type="EMBL" id="BC107759">
    <property type="protein sequence ID" value="AAI07760.1"/>
    <property type="molecule type" value="mRNA"/>
</dbReference>
<dbReference type="EMBL" id="AB058599">
    <property type="protein sequence ID" value="BAB60958.1"/>
    <property type="status" value="ALT_INIT"/>
    <property type="molecule type" value="mRNA"/>
</dbReference>
<dbReference type="EMBL" id="AJ249975">
    <property type="protein sequence ID" value="CAB99416.1"/>
    <property type="molecule type" value="mRNA"/>
</dbReference>
<dbReference type="CCDS" id="CCDS44468.1">
    <molecule id="Q9GZV1-2"/>
</dbReference>
<dbReference type="CCDS" id="CCDS7466.1">
    <molecule id="Q9GZV1-1"/>
</dbReference>
<dbReference type="PIR" id="JC7713">
    <property type="entry name" value="JC7713"/>
</dbReference>
<dbReference type="RefSeq" id="NP_001123453.1">
    <molecule id="Q9GZV1-2"/>
    <property type="nucleotide sequence ID" value="NM_001129981.3"/>
</dbReference>
<dbReference type="RefSeq" id="NP_001278147.1">
    <property type="nucleotide sequence ID" value="NM_001291218.1"/>
</dbReference>
<dbReference type="RefSeq" id="NP_001278148.2">
    <property type="nucleotide sequence ID" value="NM_001291219.2"/>
</dbReference>
<dbReference type="RefSeq" id="NP_001333726.1">
    <property type="nucleotide sequence ID" value="NM_001346797.1"/>
</dbReference>
<dbReference type="RefSeq" id="NP_065082.2">
    <molecule id="Q9GZV1-1"/>
    <property type="nucleotide sequence ID" value="NM_020349.3"/>
</dbReference>
<dbReference type="SMR" id="Q9GZV1"/>
<dbReference type="BioGRID" id="117669">
    <property type="interactions" value="16"/>
</dbReference>
<dbReference type="FunCoup" id="Q9GZV1">
    <property type="interactions" value="460"/>
</dbReference>
<dbReference type="IntAct" id="Q9GZV1">
    <property type="interactions" value="5"/>
</dbReference>
<dbReference type="STRING" id="9606.ENSP00000306163"/>
<dbReference type="iPTMnet" id="Q9GZV1"/>
<dbReference type="PhosphoSitePlus" id="Q9GZV1"/>
<dbReference type="SwissPalm" id="Q9GZV1"/>
<dbReference type="BioMuta" id="ANKRD2"/>
<dbReference type="DMDM" id="182676433"/>
<dbReference type="jPOST" id="Q9GZV1"/>
<dbReference type="MassIVE" id="Q9GZV1"/>
<dbReference type="PaxDb" id="9606-ENSP00000306163"/>
<dbReference type="PeptideAtlas" id="Q9GZV1"/>
<dbReference type="ProteomicsDB" id="80153">
    <molecule id="Q9GZV1-1"/>
</dbReference>
<dbReference type="ProteomicsDB" id="80154">
    <molecule id="Q9GZV1-2"/>
</dbReference>
<dbReference type="Pumba" id="Q9GZV1"/>
<dbReference type="Antibodypedia" id="30973">
    <property type="antibodies" value="90 antibodies from 22 providers"/>
</dbReference>
<dbReference type="DNASU" id="26287"/>
<dbReference type="Ensembl" id="ENST00000298808.9">
    <molecule id="Q9GZV1-2"/>
    <property type="protein sequence ID" value="ENSP00000298808.5"/>
    <property type="gene ID" value="ENSG00000165887.12"/>
</dbReference>
<dbReference type="Ensembl" id="ENST00000307518.9">
    <molecule id="Q9GZV1-1"/>
    <property type="protein sequence ID" value="ENSP00000306163.5"/>
    <property type="gene ID" value="ENSG00000165887.12"/>
</dbReference>
<dbReference type="GeneID" id="26287"/>
<dbReference type="KEGG" id="hsa:26287"/>
<dbReference type="UCSC" id="uc001knw.5">
    <molecule id="Q9GZV1-1"/>
    <property type="organism name" value="human"/>
</dbReference>
<dbReference type="AGR" id="HGNC:495"/>
<dbReference type="CTD" id="26287"/>
<dbReference type="DisGeNET" id="26287"/>
<dbReference type="GeneCards" id="ANKRD2"/>
<dbReference type="HGNC" id="HGNC:495">
    <property type="gene designation" value="ANKRD2"/>
</dbReference>
<dbReference type="HPA" id="ENSG00000165887">
    <property type="expression patterns" value="Group enriched (heart muscle, skeletal muscle, tongue)"/>
</dbReference>
<dbReference type="MIM" id="610734">
    <property type="type" value="gene"/>
</dbReference>
<dbReference type="neXtProt" id="NX_Q9GZV1"/>
<dbReference type="OpenTargets" id="ENSG00000165887"/>
<dbReference type="PharmGKB" id="PA24804"/>
<dbReference type="VEuPathDB" id="HostDB:ENSG00000165887"/>
<dbReference type="eggNOG" id="KOG0504">
    <property type="taxonomic scope" value="Eukaryota"/>
</dbReference>
<dbReference type="GeneTree" id="ENSGT00940000153956"/>
<dbReference type="InParanoid" id="Q9GZV1"/>
<dbReference type="OrthoDB" id="426293at2759"/>
<dbReference type="PAN-GO" id="Q9GZV1">
    <property type="GO annotations" value="3 GO annotations based on evolutionary models"/>
</dbReference>
<dbReference type="PhylomeDB" id="Q9GZV1"/>
<dbReference type="TreeFam" id="TF331650"/>
<dbReference type="PathwayCommons" id="Q9GZV1"/>
<dbReference type="SignaLink" id="Q9GZV1"/>
<dbReference type="SIGNOR" id="Q9GZV1"/>
<dbReference type="BioGRID-ORCS" id="26287">
    <property type="hits" value="6 hits in 1110 CRISPR screens"/>
</dbReference>
<dbReference type="GeneWiki" id="ANKRD2"/>
<dbReference type="GenomeRNAi" id="26287"/>
<dbReference type="Pharos" id="Q9GZV1">
    <property type="development level" value="Tbio"/>
</dbReference>
<dbReference type="PRO" id="PR:Q9GZV1"/>
<dbReference type="Proteomes" id="UP000005640">
    <property type="component" value="Chromosome 10"/>
</dbReference>
<dbReference type="RNAct" id="Q9GZV1">
    <property type="molecule type" value="protein"/>
</dbReference>
<dbReference type="Bgee" id="ENSG00000165887">
    <property type="expression patterns" value="Expressed in hindlimb stylopod muscle and 141 other cell types or tissues"/>
</dbReference>
<dbReference type="ExpressionAtlas" id="Q9GZV1">
    <property type="expression patterns" value="baseline and differential"/>
</dbReference>
<dbReference type="GO" id="GO:0005829">
    <property type="term" value="C:cytosol"/>
    <property type="evidence" value="ECO:0000314"/>
    <property type="project" value="UniProtKB"/>
</dbReference>
<dbReference type="GO" id="GO:0000791">
    <property type="term" value="C:euchromatin"/>
    <property type="evidence" value="ECO:0000250"/>
    <property type="project" value="UniProtKB"/>
</dbReference>
<dbReference type="GO" id="GO:0031674">
    <property type="term" value="C:I band"/>
    <property type="evidence" value="ECO:0007669"/>
    <property type="project" value="UniProtKB-SubCell"/>
</dbReference>
<dbReference type="GO" id="GO:0043231">
    <property type="term" value="C:intracellular membrane-bounded organelle"/>
    <property type="evidence" value="ECO:0000314"/>
    <property type="project" value="HPA"/>
</dbReference>
<dbReference type="GO" id="GO:0005634">
    <property type="term" value="C:nucleus"/>
    <property type="evidence" value="ECO:0000314"/>
    <property type="project" value="UniProtKB"/>
</dbReference>
<dbReference type="GO" id="GO:0016605">
    <property type="term" value="C:PML body"/>
    <property type="evidence" value="ECO:0007669"/>
    <property type="project" value="UniProtKB-SubCell"/>
</dbReference>
<dbReference type="GO" id="GO:0043422">
    <property type="term" value="F:protein kinase B binding"/>
    <property type="evidence" value="ECO:0000353"/>
    <property type="project" value="UniProtKB"/>
</dbReference>
<dbReference type="GO" id="GO:0061629">
    <property type="term" value="F:RNA polymerase II-specific DNA-binding transcription factor binding"/>
    <property type="evidence" value="ECO:0000314"/>
    <property type="project" value="MGI"/>
</dbReference>
<dbReference type="GO" id="GO:0008307">
    <property type="term" value="F:structural constituent of muscle"/>
    <property type="evidence" value="ECO:0000303"/>
    <property type="project" value="UniProtKB"/>
</dbReference>
<dbReference type="GO" id="GO:0006936">
    <property type="term" value="P:muscle contraction"/>
    <property type="evidence" value="ECO:0000303"/>
    <property type="project" value="UniProtKB"/>
</dbReference>
<dbReference type="GO" id="GO:0007517">
    <property type="term" value="P:muscle organ development"/>
    <property type="evidence" value="ECO:0000303"/>
    <property type="project" value="UniProtKB"/>
</dbReference>
<dbReference type="GO" id="GO:0045662">
    <property type="term" value="P:negative regulation of myoblast differentiation"/>
    <property type="evidence" value="ECO:0000315"/>
    <property type="project" value="UniProtKB"/>
</dbReference>
<dbReference type="GO" id="GO:0000122">
    <property type="term" value="P:negative regulation of transcription by RNA polymerase II"/>
    <property type="evidence" value="ECO:0000316"/>
    <property type="project" value="MGI"/>
</dbReference>
<dbReference type="GO" id="GO:0006357">
    <property type="term" value="P:regulation of transcription by RNA polymerase II"/>
    <property type="evidence" value="ECO:0000314"/>
    <property type="project" value="MGI"/>
</dbReference>
<dbReference type="FunFam" id="1.25.40.20:FF:000172">
    <property type="entry name" value="Ankyrin repeat domain-containing protein 2"/>
    <property type="match status" value="1"/>
</dbReference>
<dbReference type="FunFam" id="1.25.40.20:FF:000093">
    <property type="entry name" value="ankyrin repeat domain-containing protein 2"/>
    <property type="match status" value="1"/>
</dbReference>
<dbReference type="Gene3D" id="1.25.40.20">
    <property type="entry name" value="Ankyrin repeat-containing domain"/>
    <property type="match status" value="2"/>
</dbReference>
<dbReference type="InterPro" id="IPR002110">
    <property type="entry name" value="Ankyrin_rpt"/>
</dbReference>
<dbReference type="InterPro" id="IPR036770">
    <property type="entry name" value="Ankyrin_rpt-contain_sf"/>
</dbReference>
<dbReference type="PANTHER" id="PTHR24126:SF3">
    <property type="entry name" value="ANKYRIN REPEAT DOMAIN-CONTAINING PROTEIN 2"/>
    <property type="match status" value="1"/>
</dbReference>
<dbReference type="PANTHER" id="PTHR24126">
    <property type="entry name" value="ANKYRIN REPEAT, PH AND SEC7 DOMAIN CONTAINING PROTEIN SECG-RELATED"/>
    <property type="match status" value="1"/>
</dbReference>
<dbReference type="Pfam" id="PF12796">
    <property type="entry name" value="Ank_2"/>
    <property type="match status" value="2"/>
</dbReference>
<dbReference type="PRINTS" id="PR01415">
    <property type="entry name" value="ANKYRIN"/>
</dbReference>
<dbReference type="SMART" id="SM00248">
    <property type="entry name" value="ANK"/>
    <property type="match status" value="5"/>
</dbReference>
<dbReference type="SUPFAM" id="SSF48403">
    <property type="entry name" value="Ankyrin repeat"/>
    <property type="match status" value="1"/>
</dbReference>
<dbReference type="PROSITE" id="PS50297">
    <property type="entry name" value="ANK_REP_REGION"/>
    <property type="match status" value="1"/>
</dbReference>
<dbReference type="PROSITE" id="PS50088">
    <property type="entry name" value="ANK_REPEAT"/>
    <property type="match status" value="4"/>
</dbReference>
<name>ANKR2_HUMAN</name>
<comment type="function">
    <text evidence="8 9">Functions as a negative regulator of myocyte differentiation. May interact with both sarcoplasmic structural proteins and nuclear proteins to regulate gene expression during muscle development and in response to muscle stress.</text>
</comment>
<comment type="subunit">
    <text evidence="1 5 7 8 9">Interacts with ID3; both proteins cooperate in myoblast differentiation (By similarity). Interacts with TTN/titin. Interacts (via ANK repeats) with TCAP; the interaction is direct. Interacts with TJP1 (via PDZ domains). Interacts with PML; the interaction is direct. Interacts with p53/TP53. Interacts with YBX1. Interacts with AKT2.</text>
</comment>
<comment type="interaction">
    <interactant intactId="EBI-12111292">
        <id>Q9GZV1</id>
    </interactant>
    <interactant intactId="EBI-1384105">
        <id>Q16659</id>
        <label>MAPK6</label>
    </interactant>
    <organismsDiffer>false</organismsDiffer>
    <experiments>7</experiments>
</comment>
<comment type="subcellular location">
    <subcellularLocation>
        <location evidence="1">Cytoplasm</location>
        <location evidence="1">Myofibril</location>
        <location evidence="1">Sarcomere</location>
        <location evidence="1">I band</location>
    </subcellularLocation>
    <subcellularLocation>
        <location>Cytoplasm</location>
        <location>Cytosol</location>
    </subcellularLocation>
    <subcellularLocation>
        <location>Nucleus</location>
    </subcellularLocation>
    <subcellularLocation>
        <location>Nucleus</location>
        <location>PML body</location>
    </subcellularLocation>
    <text>In the sarcoplasm of differentiated striated muscle cells, where it is cytosolic and enriched in the I band. In nucleus and PML bodies of proliferating and undifferentiated myoblasts. Associates with the euchromatin in the nucleus of myocytes upon muscle stress.</text>
</comment>
<comment type="alternative products">
    <event type="alternative splicing"/>
    <isoform>
        <id>Q9GZV1-1</id>
        <name>1</name>
        <sequence type="displayed"/>
    </isoform>
    <isoform>
        <id>Q9GZV1-2</id>
        <name>2</name>
        <sequence type="described" ref="VSP_000269"/>
    </isoform>
</comment>
<comment type="tissue specificity">
    <text evidence="3 4">Mostly expressed in skeletal and cardiac muscles. Found in slow fibers. Also expressed in kidney, but to a lower extent (at protein level).</text>
</comment>
<comment type="PTM">
    <text evidence="8">Phosphorylation at Ser-99 by PKB/AKT2 in response to oxidative stress induces translocation to the nucleus and negatively regulates myoblast differentiation.</text>
</comment>
<comment type="sequence caution" evidence="11">
    <conflict type="erroneous termination">
        <sequence resource="EMBL" id="AK056990"/>
    </conflict>
    <text>Truncated C-terminus.</text>
</comment>
<comment type="sequence caution" evidence="11">
    <conflict type="erroneous initiation">
        <sequence resource="EMBL-CDS" id="BAB60958"/>
    </conflict>
    <text>Truncated N-terminus.</text>
</comment>
<comment type="sequence caution" evidence="11">
    <conflict type="erroneous initiation">
        <sequence resource="EMBL-CDS" id="CAC19411"/>
    </conflict>
    <text>Truncated N-terminus.</text>
</comment>
<comment type="sequence caution" evidence="11">
    <conflict type="erroneous initiation">
        <sequence resource="EMBL-CDS" id="CAC19412"/>
    </conflict>
    <text>Truncated N-terminus.</text>
</comment>
<comment type="sequence caution" evidence="11">
    <conflict type="erroneous initiation">
        <sequence resource="EMBL-CDS" id="CAE47432"/>
    </conflict>
    <text>Extended N-terminus.</text>
</comment>
<accession>Q9GZV1</accession>
<accession>Q3B778</accession>
<accession>Q5T456</accession>
<accession>Q70EZ9</accession>
<accession>Q8WUD7</accession>
<accession>Q96MG0</accession>
<accession>Q9NQC9</accession>
<organism>
    <name type="scientific">Homo sapiens</name>
    <name type="common">Human</name>
    <dbReference type="NCBI Taxonomy" id="9606"/>
    <lineage>
        <taxon>Eukaryota</taxon>
        <taxon>Metazoa</taxon>
        <taxon>Chordata</taxon>
        <taxon>Craniata</taxon>
        <taxon>Vertebrata</taxon>
        <taxon>Euteleostomi</taxon>
        <taxon>Mammalia</taxon>
        <taxon>Eutheria</taxon>
        <taxon>Euarchontoglires</taxon>
        <taxon>Primates</taxon>
        <taxon>Haplorrhini</taxon>
        <taxon>Catarrhini</taxon>
        <taxon>Hominidae</taxon>
        <taxon>Homo</taxon>
    </lineage>
</organism>
<evidence type="ECO:0000250" key="1"/>
<evidence type="ECO:0000256" key="2">
    <source>
        <dbReference type="SAM" id="MobiDB-lite"/>
    </source>
</evidence>
<evidence type="ECO:0000269" key="3">
    <source>
    </source>
</evidence>
<evidence type="ECO:0000269" key="4">
    <source>
    </source>
</evidence>
<evidence type="ECO:0000269" key="5">
    <source>
    </source>
</evidence>
<evidence type="ECO:0000269" key="6">
    <source>
    </source>
</evidence>
<evidence type="ECO:0000269" key="7">
    <source>
    </source>
</evidence>
<evidence type="ECO:0000269" key="8">
    <source>
    </source>
</evidence>
<evidence type="ECO:0000269" key="9">
    <source>
    </source>
</evidence>
<evidence type="ECO:0000303" key="10">
    <source>
    </source>
</evidence>
<evidence type="ECO:0000305" key="11"/>
<protein>
    <recommendedName>
        <fullName>Ankyrin repeat domain-containing protein 2</fullName>
    </recommendedName>
    <alternativeName>
        <fullName>Skeletal muscle ankyrin repeat protein</fullName>
        <shortName>hArpp</shortName>
    </alternativeName>
</protein>
<proteinExistence type="evidence at protein level"/>
<sequence>MAKAPSWAGVGALAYKAPEALWPAEAVMDGTMEDSEAVQRATALIEQRLAQEEENEKLRGDARQKLPMDLLVLEDEKHHGAQSAALQKVKGQERVRKTSLDLRREIIDVGGIQNLIELRKKRKQKKRDALAASHEPPPEPEEITGPVDEETFLKAAVEGKMKVIEKFLADGGSADTCDQFRRTALHRASLEGHMEILEKLLDNGATVDFQDRLDCTAMHWACRGGHLEVVKLLQSHGADTNVRDKLLSTPLHVAVRTGQVEIVEHFLSLGLEINARDREGDTALHDAVRLNRYKIIKLLLLHGADMMTKNLAGKTPTDLVQLWQADTRHALEHPEPGAEHNGLEGPNDSGRETPQPVPAQ</sequence>
<feature type="chain" id="PRO_0000066897" description="Ankyrin repeat domain-containing protein 2">
    <location>
        <begin position="1"/>
        <end position="360"/>
    </location>
</feature>
<feature type="repeat" description="ANK 1">
    <location>
        <begin position="147"/>
        <end position="176"/>
    </location>
</feature>
<feature type="repeat" description="ANK 2">
    <location>
        <begin position="180"/>
        <end position="209"/>
    </location>
</feature>
<feature type="repeat" description="ANK 3">
    <location>
        <begin position="213"/>
        <end position="242"/>
    </location>
</feature>
<feature type="repeat" description="ANK 4">
    <location>
        <begin position="246"/>
        <end position="275"/>
    </location>
</feature>
<feature type="repeat" description="ANK 5">
    <location>
        <begin position="279"/>
        <end position="308"/>
    </location>
</feature>
<feature type="region of interest" description="May mediate interaction with PML, p53/TP53 and YBX1" evidence="7">
    <location>
        <begin position="5"/>
        <end position="120"/>
    </location>
</feature>
<feature type="region of interest" description="Disordered" evidence="2">
    <location>
        <begin position="126"/>
        <end position="147"/>
    </location>
</feature>
<feature type="region of interest" description="Disordered" evidence="2">
    <location>
        <begin position="330"/>
        <end position="360"/>
    </location>
</feature>
<feature type="compositionally biased region" description="Acidic residues" evidence="2">
    <location>
        <begin position="138"/>
        <end position="147"/>
    </location>
</feature>
<feature type="compositionally biased region" description="Basic and acidic residues" evidence="2">
    <location>
        <begin position="330"/>
        <end position="342"/>
    </location>
</feature>
<feature type="modified residue" description="Phosphoserine; by PKB/AKT2" evidence="8">
    <location>
        <position position="99"/>
    </location>
</feature>
<feature type="splice variant" id="VSP_000269" description="In isoform 2." evidence="10">
    <location>
        <begin position="246"/>
        <end position="278"/>
    </location>
</feature>
<feature type="sequence variant" id="VAR_042498" description="In dbSNP:rs7094973." evidence="3 4 5 6">
    <original>A</original>
    <variation>T</variation>
    <location>
        <position position="62"/>
    </location>
</feature>
<feature type="mutagenesis site" description="Loss of interaction and phosphorylation by PKB/AKT2, loss of translocation to the nucleus and loss of function in myocyte differentiation." evidence="8">
    <original>S</original>
    <variation>A</variation>
    <location>
        <position position="99"/>
    </location>
</feature>
<feature type="sequence conflict" description="In Ref. 7; CAB99416." evidence="11" ref="7">
    <original>L</original>
    <variation>S</variation>
    <location>
        <position position="49"/>
    </location>
</feature>
<reference key="1">
    <citation type="journal article" date="2001" name="Biochem. Biophys. Res. Commun.">
        <title>Characterization of human skeletal muscle Ankrd2.</title>
        <authorList>
            <person name="Pallavicini A."/>
            <person name="Kojic S."/>
            <person name="Bean C."/>
            <person name="Vainzof M."/>
            <person name="Salamon M."/>
            <person name="Ievolella C."/>
            <person name="Bortoletto G."/>
            <person name="Pacchioni B."/>
            <person name="Zatz M."/>
            <person name="Lanfranchi G."/>
            <person name="Faulkner G."/>
            <person name="Valle G."/>
        </authorList>
    </citation>
    <scope>NUCLEOTIDE SEQUENCE [GENOMIC DNA] (ISOFORM 1)</scope>
    <scope>NUCLEOTIDE SEQUENCE [MRNA] OF 25-360 (ISOFORM 1)</scope>
    <scope>VARIANT THR-62</scope>
    <scope>TISSUE SPECIFICITY</scope>
    <source>
        <tissue>Skeletal muscle</tissue>
    </source>
</reference>
<reference key="2">
    <citation type="journal article" date="2003" name="J. Mol. Biol.">
        <title>The muscle ankyrin repeat proteins: CARP, ankrd2/Arpp and DARP as a family of titin filament-based stress response molecules.</title>
        <authorList>
            <person name="Miller M.K."/>
            <person name="Bang M.-L."/>
            <person name="Witt C.C."/>
            <person name="Labeit D."/>
            <person name="Trombitas C."/>
            <person name="Watanabe K."/>
            <person name="Granzier H."/>
            <person name="McElhinny A.S."/>
            <person name="Gregorio C.C."/>
            <person name="Labeit S."/>
        </authorList>
    </citation>
    <scope>NUCLEOTIDE SEQUENCE [MRNA]</scope>
    <scope>INTERACTION WITH TTN</scope>
    <scope>VARIANT THR-62</scope>
    <source>
        <tissue>Heart</tissue>
    </source>
</reference>
<reference key="3">
    <citation type="journal article" date="2004" name="Nat. Genet.">
        <title>Complete sequencing and characterization of 21,243 full-length human cDNAs.</title>
        <authorList>
            <person name="Ota T."/>
            <person name="Suzuki Y."/>
            <person name="Nishikawa T."/>
            <person name="Otsuki T."/>
            <person name="Sugiyama T."/>
            <person name="Irie R."/>
            <person name="Wakamatsu A."/>
            <person name="Hayashi K."/>
            <person name="Sato H."/>
            <person name="Nagai K."/>
            <person name="Kimura K."/>
            <person name="Makita H."/>
            <person name="Sekine M."/>
            <person name="Obayashi M."/>
            <person name="Nishi T."/>
            <person name="Shibahara T."/>
            <person name="Tanaka T."/>
            <person name="Ishii S."/>
            <person name="Yamamoto J."/>
            <person name="Saito K."/>
            <person name="Kawai Y."/>
            <person name="Isono Y."/>
            <person name="Nakamura Y."/>
            <person name="Nagahari K."/>
            <person name="Murakami K."/>
            <person name="Yasuda T."/>
            <person name="Iwayanagi T."/>
            <person name="Wagatsuma M."/>
            <person name="Shiratori A."/>
            <person name="Sudo H."/>
            <person name="Hosoiri T."/>
            <person name="Kaku Y."/>
            <person name="Kodaira H."/>
            <person name="Kondo H."/>
            <person name="Sugawara M."/>
            <person name="Takahashi M."/>
            <person name="Kanda K."/>
            <person name="Yokoi T."/>
            <person name="Furuya T."/>
            <person name="Kikkawa E."/>
            <person name="Omura Y."/>
            <person name="Abe K."/>
            <person name="Kamihara K."/>
            <person name="Katsuta N."/>
            <person name="Sato K."/>
            <person name="Tanikawa M."/>
            <person name="Yamazaki M."/>
            <person name="Ninomiya K."/>
            <person name="Ishibashi T."/>
            <person name="Yamashita H."/>
            <person name="Murakawa K."/>
            <person name="Fujimori K."/>
            <person name="Tanai H."/>
            <person name="Kimata M."/>
            <person name="Watanabe M."/>
            <person name="Hiraoka S."/>
            <person name="Chiba Y."/>
            <person name="Ishida S."/>
            <person name="Ono Y."/>
            <person name="Takiguchi S."/>
            <person name="Watanabe S."/>
            <person name="Yosida M."/>
            <person name="Hotuta T."/>
            <person name="Kusano J."/>
            <person name="Kanehori K."/>
            <person name="Takahashi-Fujii A."/>
            <person name="Hara H."/>
            <person name="Tanase T.-O."/>
            <person name="Nomura Y."/>
            <person name="Togiya S."/>
            <person name="Komai F."/>
            <person name="Hara R."/>
            <person name="Takeuchi K."/>
            <person name="Arita M."/>
            <person name="Imose N."/>
            <person name="Musashino K."/>
            <person name="Yuuki H."/>
            <person name="Oshima A."/>
            <person name="Sasaki N."/>
            <person name="Aotsuka S."/>
            <person name="Yoshikawa Y."/>
            <person name="Matsunawa H."/>
            <person name="Ichihara T."/>
            <person name="Shiohata N."/>
            <person name="Sano S."/>
            <person name="Moriya S."/>
            <person name="Momiyama H."/>
            <person name="Satoh N."/>
            <person name="Takami S."/>
            <person name="Terashima Y."/>
            <person name="Suzuki O."/>
            <person name="Nakagawa S."/>
            <person name="Senoh A."/>
            <person name="Mizoguchi H."/>
            <person name="Goto Y."/>
            <person name="Shimizu F."/>
            <person name="Wakebe H."/>
            <person name="Hishigaki H."/>
            <person name="Watanabe T."/>
            <person name="Sugiyama A."/>
            <person name="Takemoto M."/>
            <person name="Kawakami B."/>
            <person name="Yamazaki M."/>
            <person name="Watanabe K."/>
            <person name="Kumagai A."/>
            <person name="Itakura S."/>
            <person name="Fukuzumi Y."/>
            <person name="Fujimori Y."/>
            <person name="Komiyama M."/>
            <person name="Tashiro H."/>
            <person name="Tanigami A."/>
            <person name="Fujiwara T."/>
            <person name="Ono T."/>
            <person name="Yamada K."/>
            <person name="Fujii Y."/>
            <person name="Ozaki K."/>
            <person name="Hirao M."/>
            <person name="Ohmori Y."/>
            <person name="Kawabata A."/>
            <person name="Hikiji T."/>
            <person name="Kobatake N."/>
            <person name="Inagaki H."/>
            <person name="Ikema Y."/>
            <person name="Okamoto S."/>
            <person name="Okitani R."/>
            <person name="Kawakami T."/>
            <person name="Noguchi S."/>
            <person name="Itoh T."/>
            <person name="Shigeta K."/>
            <person name="Senba T."/>
            <person name="Matsumura K."/>
            <person name="Nakajima Y."/>
            <person name="Mizuno T."/>
            <person name="Morinaga M."/>
            <person name="Sasaki M."/>
            <person name="Togashi T."/>
            <person name="Oyama M."/>
            <person name="Hata H."/>
            <person name="Watanabe M."/>
            <person name="Komatsu T."/>
            <person name="Mizushima-Sugano J."/>
            <person name="Satoh T."/>
            <person name="Shirai Y."/>
            <person name="Takahashi Y."/>
            <person name="Nakagawa K."/>
            <person name="Okumura K."/>
            <person name="Nagase T."/>
            <person name="Nomura N."/>
            <person name="Kikuchi H."/>
            <person name="Masuho Y."/>
            <person name="Yamashita R."/>
            <person name="Nakai K."/>
            <person name="Yada T."/>
            <person name="Nakamura Y."/>
            <person name="Ohara O."/>
            <person name="Isogai T."/>
            <person name="Sugano S."/>
        </authorList>
    </citation>
    <scope>NUCLEOTIDE SEQUENCE [LARGE SCALE MRNA] (ISOFORM 1)</scope>
    <scope>VARIANT THR-62</scope>
    <source>
        <tissue>Skeletal muscle</tissue>
    </source>
</reference>
<reference key="4">
    <citation type="journal article" date="2004" name="Nature">
        <title>The DNA sequence and comparative analysis of human chromosome 10.</title>
        <authorList>
            <person name="Deloukas P."/>
            <person name="Earthrowl M.E."/>
            <person name="Grafham D.V."/>
            <person name="Rubenfield M."/>
            <person name="French L."/>
            <person name="Steward C.A."/>
            <person name="Sims S.K."/>
            <person name="Jones M.C."/>
            <person name="Searle S."/>
            <person name="Scott C."/>
            <person name="Howe K."/>
            <person name="Hunt S.E."/>
            <person name="Andrews T.D."/>
            <person name="Gilbert J.G.R."/>
            <person name="Swarbreck D."/>
            <person name="Ashurst J.L."/>
            <person name="Taylor A."/>
            <person name="Battles J."/>
            <person name="Bird C.P."/>
            <person name="Ainscough R."/>
            <person name="Almeida J.P."/>
            <person name="Ashwell R.I.S."/>
            <person name="Ambrose K.D."/>
            <person name="Babbage A.K."/>
            <person name="Bagguley C.L."/>
            <person name="Bailey J."/>
            <person name="Banerjee R."/>
            <person name="Bates K."/>
            <person name="Beasley H."/>
            <person name="Bray-Allen S."/>
            <person name="Brown A.J."/>
            <person name="Brown J.Y."/>
            <person name="Burford D.C."/>
            <person name="Burrill W."/>
            <person name="Burton J."/>
            <person name="Cahill P."/>
            <person name="Camire D."/>
            <person name="Carter N.P."/>
            <person name="Chapman J.C."/>
            <person name="Clark S.Y."/>
            <person name="Clarke G."/>
            <person name="Clee C.M."/>
            <person name="Clegg S."/>
            <person name="Corby N."/>
            <person name="Coulson A."/>
            <person name="Dhami P."/>
            <person name="Dutta I."/>
            <person name="Dunn M."/>
            <person name="Faulkner L."/>
            <person name="Frankish A."/>
            <person name="Frankland J.A."/>
            <person name="Garner P."/>
            <person name="Garnett J."/>
            <person name="Gribble S."/>
            <person name="Griffiths C."/>
            <person name="Grocock R."/>
            <person name="Gustafson E."/>
            <person name="Hammond S."/>
            <person name="Harley J.L."/>
            <person name="Hart E."/>
            <person name="Heath P.D."/>
            <person name="Ho T.P."/>
            <person name="Hopkins B."/>
            <person name="Horne J."/>
            <person name="Howden P.J."/>
            <person name="Huckle E."/>
            <person name="Hynds C."/>
            <person name="Johnson C."/>
            <person name="Johnson D."/>
            <person name="Kana A."/>
            <person name="Kay M."/>
            <person name="Kimberley A.M."/>
            <person name="Kershaw J.K."/>
            <person name="Kokkinaki M."/>
            <person name="Laird G.K."/>
            <person name="Lawlor S."/>
            <person name="Lee H.M."/>
            <person name="Leongamornlert D.A."/>
            <person name="Laird G."/>
            <person name="Lloyd C."/>
            <person name="Lloyd D.M."/>
            <person name="Loveland J."/>
            <person name="Lovell J."/>
            <person name="McLaren S."/>
            <person name="McLay K.E."/>
            <person name="McMurray A."/>
            <person name="Mashreghi-Mohammadi M."/>
            <person name="Matthews L."/>
            <person name="Milne S."/>
            <person name="Nickerson T."/>
            <person name="Nguyen M."/>
            <person name="Overton-Larty E."/>
            <person name="Palmer S.A."/>
            <person name="Pearce A.V."/>
            <person name="Peck A.I."/>
            <person name="Pelan S."/>
            <person name="Phillimore B."/>
            <person name="Porter K."/>
            <person name="Rice C.M."/>
            <person name="Rogosin A."/>
            <person name="Ross M.T."/>
            <person name="Sarafidou T."/>
            <person name="Sehra H.K."/>
            <person name="Shownkeen R."/>
            <person name="Skuce C.D."/>
            <person name="Smith M."/>
            <person name="Standring L."/>
            <person name="Sycamore N."/>
            <person name="Tester J."/>
            <person name="Thorpe A."/>
            <person name="Torcasso W."/>
            <person name="Tracey A."/>
            <person name="Tromans A."/>
            <person name="Tsolas J."/>
            <person name="Wall M."/>
            <person name="Walsh J."/>
            <person name="Wang H."/>
            <person name="Weinstock K."/>
            <person name="West A.P."/>
            <person name="Willey D.L."/>
            <person name="Whitehead S.L."/>
            <person name="Wilming L."/>
            <person name="Wray P.W."/>
            <person name="Young L."/>
            <person name="Chen Y."/>
            <person name="Lovering R.C."/>
            <person name="Moschonas N.K."/>
            <person name="Siebert R."/>
            <person name="Fechtel K."/>
            <person name="Bentley D."/>
            <person name="Durbin R.M."/>
            <person name="Hubbard T."/>
            <person name="Doucette-Stamm L."/>
            <person name="Beck S."/>
            <person name="Smith D.R."/>
            <person name="Rogers J."/>
        </authorList>
    </citation>
    <scope>NUCLEOTIDE SEQUENCE [LARGE SCALE GENOMIC DNA]</scope>
</reference>
<reference key="5">
    <citation type="journal article" date="2004" name="Genome Res.">
        <title>The status, quality, and expansion of the NIH full-length cDNA project: the Mammalian Gene Collection (MGC).</title>
        <authorList>
            <consortium name="The MGC Project Team"/>
        </authorList>
    </citation>
    <scope>NUCLEOTIDE SEQUENCE [LARGE SCALE MRNA] (ISOFORM 1)</scope>
    <scope>NUCLEOTIDE SEQUENCE [LARGE SCALE MRNA] OF 25-360 (ISOFORM 2)</scope>
    <source>
        <tissue>Skeletal muscle</tissue>
    </source>
</reference>
<reference key="6">
    <citation type="journal article" date="2001" name="Biochem. Biophys. Res. Commun.">
        <title>Identification of a novel human ankyrin-repeated protein homologous to CARP.</title>
        <authorList>
            <person name="Moriyama M."/>
            <person name="Tsukamoto Y."/>
            <person name="Fujiwara M."/>
            <person name="Kondo G."/>
            <person name="Nakada C."/>
            <person name="Baba T."/>
            <person name="Ishiguro N."/>
            <person name="Miyazaki A."/>
            <person name="Nakamura K."/>
            <person name="Hori N."/>
            <person name="Sato K."/>
            <person name="Shomori K."/>
            <person name="Takeuchi K."/>
            <person name="Satoh H."/>
            <person name="Mori S."/>
            <person name="Ito H."/>
        </authorList>
    </citation>
    <scope>NUCLEOTIDE SEQUENCE [MRNA] OF 25-360 (ISOFORM 1)</scope>
    <scope>TISSUE SPECIFICITY</scope>
    <scope>VARIANT THR-62</scope>
</reference>
<reference key="7">
    <citation type="journal article" date="2000" name="Genomics">
        <title>Identification of Ankrd2, a novel skeletal muscle gene coding for a stretch-responsive ankyrin-repeat protein.</title>
        <authorList>
            <person name="Kemp T.J."/>
            <person name="Sadusky T.J."/>
            <person name="Saltisi F."/>
            <person name="Carey N."/>
            <person name="Moss J."/>
            <person name="Yang S.Y."/>
            <person name="Sassoon D.A."/>
            <person name="Goldspink G."/>
            <person name="Coulton G.R."/>
        </authorList>
    </citation>
    <scope>NUCLEOTIDE SEQUENCE [MRNA] OF 49-150</scope>
    <source>
        <tissue>Skeletal muscle</tissue>
    </source>
</reference>
<reference key="8">
    <citation type="journal article" date="2004" name="J. Mol. Biol.">
        <title>The Ankrd2 protein, a link between the sarcomere and the nucleus in skeletal muscle.</title>
        <authorList>
            <person name="Kojic S."/>
            <person name="Medeot E."/>
            <person name="Guccione E."/>
            <person name="Krmac H."/>
            <person name="Zara I."/>
            <person name="Martinelli V."/>
            <person name="Valle G."/>
            <person name="Faulkner G."/>
        </authorList>
    </citation>
    <scope>INTERACTION WITH PML; TCAP; TP53/P53 AND YBX1</scope>
    <scope>SUBCELLULAR LOCATION</scope>
</reference>
<reference key="9">
    <citation type="journal article" date="2011" name="Mol. Biol. Cell">
        <title>Ankrd2/ARPP is a novel Akt2 specific substrate and regulates myogenic differentiation upon cellular exposure to H(2)O(2).</title>
        <authorList>
            <person name="Cenni V."/>
            <person name="Bavelloni A."/>
            <person name="Beretti F."/>
            <person name="Tagliavini F."/>
            <person name="Manzoli L."/>
            <person name="Lattanzi G."/>
            <person name="Maraldi N.M."/>
            <person name="Cocco L."/>
            <person name="Marmiroli S."/>
        </authorList>
    </citation>
    <scope>FUNCTION</scope>
    <scope>PHOSPHORYLATION AT SER-99 BY PKB/AKT2</scope>
    <scope>MUTAGENESIS OF SER-99</scope>
    <scope>INTERACTION WITH AKT2</scope>
    <scope>SUBCELLULAR LOCATION</scope>
</reference>
<reference key="10">
    <citation type="journal article" date="2011" name="PLoS ONE">
        <title>Multi-tasking role of the mechanosensing protein Ankrd2 in the signaling network of striated muscle.</title>
        <authorList>
            <person name="Belgrano A."/>
            <person name="Rakicevic L."/>
            <person name="Mittempergher L."/>
            <person name="Campanaro S."/>
            <person name="Martinelli V.C."/>
            <person name="Mouly V."/>
            <person name="Valle G."/>
            <person name="Kojic S."/>
            <person name="Faulkner G."/>
        </authorList>
    </citation>
    <scope>FUNCTION</scope>
    <scope>INTERACTION WITH TJP1</scope>
</reference>